<gene>
    <name type="primary">gatA</name>
    <name type="ordered locus">SCO5499</name>
    <name type="ORF">SC8D9.11</name>
</gene>
<sequence length="497" mass="52270">MSDIIKLTAAEIAAKIASGELTAVQVTEAHLARIEAVDEKVHAFLHVDREGALAQARAVDEKRERGEKLGPLAGVPLALKDIFTTEGIPTTVGSKILEGWIPPYDATVTKRLKAADVVILGKTNMDEFAMGSSTENSAYGPTGNPWDLTKIPGGSGGGSSAALAAFQAPLAIGTDTGGSIRQPASVTGTVGVKPTYGGVSRYGMVAFSSSLDQGGPCARTVLDAALLHEVIAGHDPMDSTSIDAPVPAVVEAARNGSVDGMRVGVVKQFRGEGYQAGVVQRFDESVELLKSLGAEIVELDCPSFDLALSAYYLIAPSECSSNLARFDGLRYGARVGDDGTHSAEEVTSLTREAGFGPEVKRRIMLGTYALSSGYYDAYYGSAQKVRTLIKQEFERAFEQVDVIVSPTTPTTAFAIGERADDPMAMYLADLCTIPTNLAGNAAMSLPCGLAPEDNLPVGLQIIAPAMKDDRLYKVGAAVEAAFVEKWGHPLIEEAPSL</sequence>
<feature type="chain" id="PRO_0000105210" description="Glutamyl-tRNA(Gln) amidotransferase subunit A">
    <location>
        <begin position="1"/>
        <end position="497"/>
    </location>
</feature>
<feature type="active site" description="Charge relay system" evidence="1">
    <location>
        <position position="80"/>
    </location>
</feature>
<feature type="active site" description="Charge relay system" evidence="1">
    <location>
        <position position="155"/>
    </location>
</feature>
<feature type="active site" description="Acyl-ester intermediate" evidence="1">
    <location>
        <position position="179"/>
    </location>
</feature>
<reference key="1">
    <citation type="journal article" date="2002" name="Nature">
        <title>Complete genome sequence of the model actinomycete Streptomyces coelicolor A3(2).</title>
        <authorList>
            <person name="Bentley S.D."/>
            <person name="Chater K.F."/>
            <person name="Cerdeno-Tarraga A.-M."/>
            <person name="Challis G.L."/>
            <person name="Thomson N.R."/>
            <person name="James K.D."/>
            <person name="Harris D.E."/>
            <person name="Quail M.A."/>
            <person name="Kieser H."/>
            <person name="Harper D."/>
            <person name="Bateman A."/>
            <person name="Brown S."/>
            <person name="Chandra G."/>
            <person name="Chen C.W."/>
            <person name="Collins M."/>
            <person name="Cronin A."/>
            <person name="Fraser A."/>
            <person name="Goble A."/>
            <person name="Hidalgo J."/>
            <person name="Hornsby T."/>
            <person name="Howarth S."/>
            <person name="Huang C.-H."/>
            <person name="Kieser T."/>
            <person name="Larke L."/>
            <person name="Murphy L.D."/>
            <person name="Oliver K."/>
            <person name="O'Neil S."/>
            <person name="Rabbinowitsch E."/>
            <person name="Rajandream M.A."/>
            <person name="Rutherford K.M."/>
            <person name="Rutter S."/>
            <person name="Seeger K."/>
            <person name="Saunders D."/>
            <person name="Sharp S."/>
            <person name="Squares R."/>
            <person name="Squares S."/>
            <person name="Taylor K."/>
            <person name="Warren T."/>
            <person name="Wietzorrek A."/>
            <person name="Woodward J.R."/>
            <person name="Barrell B.G."/>
            <person name="Parkhill J."/>
            <person name="Hopwood D.A."/>
        </authorList>
    </citation>
    <scope>NUCLEOTIDE SEQUENCE [LARGE SCALE GENOMIC DNA]</scope>
    <source>
        <strain>ATCC BAA-471 / A3(2) / M145</strain>
    </source>
</reference>
<accession>Q9Z580</accession>
<evidence type="ECO:0000250" key="1"/>
<evidence type="ECO:0000305" key="2"/>
<keyword id="KW-0067">ATP-binding</keyword>
<keyword id="KW-0436">Ligase</keyword>
<keyword id="KW-0547">Nucleotide-binding</keyword>
<keyword id="KW-0648">Protein biosynthesis</keyword>
<keyword id="KW-1185">Reference proteome</keyword>
<name>GATA_STRCO</name>
<comment type="function">
    <text evidence="1">Allows the formation of correctly charged Gln-tRNA(Gln) through the transamidation of misacylated Glu-tRNA(Gln) in organisms which lack glutaminyl-tRNA synthetase. The reaction takes place in the presence of glutamine and ATP through an activated gamma-phospho-Glu-tRNA(Gln) (By similarity).</text>
</comment>
<comment type="catalytic activity">
    <reaction>
        <text>L-glutamyl-tRNA(Gln) + L-glutamine + ATP + H2O = L-glutaminyl-tRNA(Gln) + L-glutamate + ADP + phosphate + H(+)</text>
        <dbReference type="Rhea" id="RHEA:17521"/>
        <dbReference type="Rhea" id="RHEA-COMP:9681"/>
        <dbReference type="Rhea" id="RHEA-COMP:9684"/>
        <dbReference type="ChEBI" id="CHEBI:15377"/>
        <dbReference type="ChEBI" id="CHEBI:15378"/>
        <dbReference type="ChEBI" id="CHEBI:29985"/>
        <dbReference type="ChEBI" id="CHEBI:30616"/>
        <dbReference type="ChEBI" id="CHEBI:43474"/>
        <dbReference type="ChEBI" id="CHEBI:58359"/>
        <dbReference type="ChEBI" id="CHEBI:78520"/>
        <dbReference type="ChEBI" id="CHEBI:78521"/>
        <dbReference type="ChEBI" id="CHEBI:456216"/>
        <dbReference type="EC" id="6.3.5.7"/>
    </reaction>
</comment>
<comment type="subunit">
    <text evidence="1">Heterotrimer of A, B and C subunits.</text>
</comment>
<comment type="similarity">
    <text evidence="2">Belongs to the amidase family. GatA subfamily.</text>
</comment>
<organism>
    <name type="scientific">Streptomyces coelicolor (strain ATCC BAA-471 / A3(2) / M145)</name>
    <dbReference type="NCBI Taxonomy" id="100226"/>
    <lineage>
        <taxon>Bacteria</taxon>
        <taxon>Bacillati</taxon>
        <taxon>Actinomycetota</taxon>
        <taxon>Actinomycetes</taxon>
        <taxon>Kitasatosporales</taxon>
        <taxon>Streptomycetaceae</taxon>
        <taxon>Streptomyces</taxon>
        <taxon>Streptomyces albidoflavus group</taxon>
    </lineage>
</organism>
<proteinExistence type="inferred from homology"/>
<protein>
    <recommendedName>
        <fullName>Glutamyl-tRNA(Gln) amidotransferase subunit A</fullName>
        <shortName>Glu-ADT subunit A</shortName>
        <ecNumber>6.3.5.7</ecNumber>
    </recommendedName>
</protein>
<dbReference type="EC" id="6.3.5.7"/>
<dbReference type="EMBL" id="AL939124">
    <property type="protein sequence ID" value="CAB37575.1"/>
    <property type="molecule type" value="Genomic_DNA"/>
</dbReference>
<dbReference type="PIR" id="T35815">
    <property type="entry name" value="T35815"/>
</dbReference>
<dbReference type="RefSeq" id="NP_629634.1">
    <property type="nucleotide sequence ID" value="NC_003888.3"/>
</dbReference>
<dbReference type="RefSeq" id="WP_003973499.1">
    <property type="nucleotide sequence ID" value="NZ_VNID01000011.1"/>
</dbReference>
<dbReference type="SMR" id="Q9Z580"/>
<dbReference type="FunCoup" id="Q9Z580">
    <property type="interactions" value="343"/>
</dbReference>
<dbReference type="STRING" id="100226.gene:17763151"/>
<dbReference type="PaxDb" id="100226-SCO5499"/>
<dbReference type="GeneID" id="96655224"/>
<dbReference type="KEGG" id="sco:SCO5499"/>
<dbReference type="PATRIC" id="fig|100226.15.peg.5583"/>
<dbReference type="eggNOG" id="COG0154">
    <property type="taxonomic scope" value="Bacteria"/>
</dbReference>
<dbReference type="HOGENOM" id="CLU_009600_0_3_11"/>
<dbReference type="InParanoid" id="Q9Z580"/>
<dbReference type="OrthoDB" id="9811471at2"/>
<dbReference type="PhylomeDB" id="Q9Z580"/>
<dbReference type="Proteomes" id="UP000001973">
    <property type="component" value="Chromosome"/>
</dbReference>
<dbReference type="GO" id="GO:0030956">
    <property type="term" value="C:glutamyl-tRNA(Gln) amidotransferase complex"/>
    <property type="evidence" value="ECO:0007669"/>
    <property type="project" value="InterPro"/>
</dbReference>
<dbReference type="GO" id="GO:0005524">
    <property type="term" value="F:ATP binding"/>
    <property type="evidence" value="ECO:0007669"/>
    <property type="project" value="UniProtKB-KW"/>
</dbReference>
<dbReference type="GO" id="GO:0050567">
    <property type="term" value="F:glutaminyl-tRNA synthase (glutamine-hydrolyzing) activity"/>
    <property type="evidence" value="ECO:0007669"/>
    <property type="project" value="UniProtKB-UniRule"/>
</dbReference>
<dbReference type="GO" id="GO:0006412">
    <property type="term" value="P:translation"/>
    <property type="evidence" value="ECO:0007669"/>
    <property type="project" value="UniProtKB-UniRule"/>
</dbReference>
<dbReference type="Gene3D" id="3.90.1300.10">
    <property type="entry name" value="Amidase signature (AS) domain"/>
    <property type="match status" value="1"/>
</dbReference>
<dbReference type="HAMAP" id="MF_00120">
    <property type="entry name" value="GatA"/>
    <property type="match status" value="1"/>
</dbReference>
<dbReference type="InterPro" id="IPR000120">
    <property type="entry name" value="Amidase"/>
</dbReference>
<dbReference type="InterPro" id="IPR020556">
    <property type="entry name" value="Amidase_CS"/>
</dbReference>
<dbReference type="InterPro" id="IPR023631">
    <property type="entry name" value="Amidase_dom"/>
</dbReference>
<dbReference type="InterPro" id="IPR036928">
    <property type="entry name" value="AS_sf"/>
</dbReference>
<dbReference type="InterPro" id="IPR004412">
    <property type="entry name" value="GatA"/>
</dbReference>
<dbReference type="NCBIfam" id="TIGR00132">
    <property type="entry name" value="gatA"/>
    <property type="match status" value="1"/>
</dbReference>
<dbReference type="PANTHER" id="PTHR11895:SF151">
    <property type="entry name" value="GLUTAMYL-TRNA(GLN) AMIDOTRANSFERASE SUBUNIT A"/>
    <property type="match status" value="1"/>
</dbReference>
<dbReference type="PANTHER" id="PTHR11895">
    <property type="entry name" value="TRANSAMIDASE"/>
    <property type="match status" value="1"/>
</dbReference>
<dbReference type="Pfam" id="PF01425">
    <property type="entry name" value="Amidase"/>
    <property type="match status" value="1"/>
</dbReference>
<dbReference type="SUPFAM" id="SSF75304">
    <property type="entry name" value="Amidase signature (AS) enzymes"/>
    <property type="match status" value="1"/>
</dbReference>
<dbReference type="PROSITE" id="PS00571">
    <property type="entry name" value="AMIDASES"/>
    <property type="match status" value="1"/>
</dbReference>